<organism>
    <name type="scientific">Trieres chinensis</name>
    <name type="common">Marine centric diatom</name>
    <name type="synonym">Odontella sinensis</name>
    <dbReference type="NCBI Taxonomy" id="1514140"/>
    <lineage>
        <taxon>Eukaryota</taxon>
        <taxon>Sar</taxon>
        <taxon>Stramenopiles</taxon>
        <taxon>Ochrophyta</taxon>
        <taxon>Bacillariophyta</taxon>
        <taxon>Mediophyceae</taxon>
        <taxon>Biddulphiophycidae</taxon>
        <taxon>Eupodiscales</taxon>
        <taxon>Parodontellaceae</taxon>
        <taxon>Trieres</taxon>
    </lineage>
</organism>
<protein>
    <recommendedName>
        <fullName evidence="1">Photosystem II reaction center protein H</fullName>
        <shortName evidence="1">PSII-H</shortName>
    </recommendedName>
</protein>
<comment type="function">
    <text evidence="1">One of the components of the core complex of photosystem II (PSII), required for its stability and/or assembly. PSII is a light-driven water:plastoquinone oxidoreductase that uses light energy to abstract electrons from H(2)O, generating O(2) and a proton gradient subsequently used for ATP formation. It consists of a core antenna complex that captures photons, and an electron transfer chain that converts photonic excitation into a charge separation.</text>
</comment>
<comment type="subunit">
    <text evidence="1">PSII is composed of 1 copy each of membrane proteins PsbA, PsbB, PsbC, PsbD, PsbE, PsbF, PsbH, PsbI, PsbJ, PsbK, PsbL, PsbM, PsbT, PsbX, PsbY, PsbZ, Psb30/Ycf12, at least 3 peripheral proteins of the oxygen-evolving complex and a large number of cofactors. It forms dimeric complexes.</text>
</comment>
<comment type="subcellular location">
    <subcellularLocation>
        <location evidence="1">Plastid</location>
        <location evidence="1">Chloroplast thylakoid membrane</location>
        <topology evidence="1">Single-pass membrane protein</topology>
    </subcellularLocation>
</comment>
<comment type="similarity">
    <text evidence="1">Belongs to the PsbH family.</text>
</comment>
<sequence length="67" mass="7417">MALRTRLGEILRPLNAEYGKVAPGWGTTPIMGVVMLAFLVFLLIILQIYNSSLIIENVDVDWSNGIV</sequence>
<reference key="1">
    <citation type="journal article" date="1995" name="Plant Mol. Biol. Rep.">
        <title>The chloroplast genome of a chlorophyll a+c-containing alga, Odontella sinensis.</title>
        <authorList>
            <person name="Kowallik K.V."/>
            <person name="Stoebe B."/>
            <person name="Schaffran I."/>
            <person name="Kroth-Pancic P."/>
            <person name="Freier U."/>
        </authorList>
    </citation>
    <scope>NUCLEOTIDE SEQUENCE [LARGE SCALE GENOMIC DNA]</scope>
</reference>
<evidence type="ECO:0000255" key="1">
    <source>
        <dbReference type="HAMAP-Rule" id="MF_00752"/>
    </source>
</evidence>
<accession>P49475</accession>
<dbReference type="EMBL" id="Z67753">
    <property type="protein sequence ID" value="CAA91698.1"/>
    <property type="molecule type" value="Genomic_DNA"/>
</dbReference>
<dbReference type="PIR" id="S78325">
    <property type="entry name" value="S78325"/>
</dbReference>
<dbReference type="RefSeq" id="NP_043666.1">
    <property type="nucleotide sequence ID" value="NC_001713.1"/>
</dbReference>
<dbReference type="SMR" id="P49475"/>
<dbReference type="GeneID" id="801792"/>
<dbReference type="GO" id="GO:0009535">
    <property type="term" value="C:chloroplast thylakoid membrane"/>
    <property type="evidence" value="ECO:0007669"/>
    <property type="project" value="UniProtKB-SubCell"/>
</dbReference>
<dbReference type="GO" id="GO:0009523">
    <property type="term" value="C:photosystem II"/>
    <property type="evidence" value="ECO:0007669"/>
    <property type="project" value="UniProtKB-KW"/>
</dbReference>
<dbReference type="GO" id="GO:0042301">
    <property type="term" value="F:phosphate ion binding"/>
    <property type="evidence" value="ECO:0007669"/>
    <property type="project" value="InterPro"/>
</dbReference>
<dbReference type="GO" id="GO:0015979">
    <property type="term" value="P:photosynthesis"/>
    <property type="evidence" value="ECO:0007669"/>
    <property type="project" value="UniProtKB-UniRule"/>
</dbReference>
<dbReference type="GO" id="GO:0050821">
    <property type="term" value="P:protein stabilization"/>
    <property type="evidence" value="ECO:0007669"/>
    <property type="project" value="InterPro"/>
</dbReference>
<dbReference type="Gene3D" id="1.20.5.880">
    <property type="entry name" value="Photosystem II reaction center protein H"/>
    <property type="match status" value="1"/>
</dbReference>
<dbReference type="HAMAP" id="MF_00752">
    <property type="entry name" value="PSII_PsbH"/>
    <property type="match status" value="1"/>
</dbReference>
<dbReference type="InterPro" id="IPR001056">
    <property type="entry name" value="PSII_PsbH"/>
</dbReference>
<dbReference type="InterPro" id="IPR036863">
    <property type="entry name" value="PSII_PsbH_sf"/>
</dbReference>
<dbReference type="NCBIfam" id="NF002728">
    <property type="entry name" value="PRK02624.1"/>
    <property type="match status" value="1"/>
</dbReference>
<dbReference type="PANTHER" id="PTHR34469">
    <property type="entry name" value="PHOTOSYSTEM II REACTION CENTER PROTEIN H"/>
    <property type="match status" value="1"/>
</dbReference>
<dbReference type="PANTHER" id="PTHR34469:SF4">
    <property type="entry name" value="PHOTOSYSTEM II REACTION CENTER PROTEIN H"/>
    <property type="match status" value="1"/>
</dbReference>
<dbReference type="Pfam" id="PF00737">
    <property type="entry name" value="PsbH"/>
    <property type="match status" value="1"/>
</dbReference>
<dbReference type="SUPFAM" id="SSF161025">
    <property type="entry name" value="Photosystem II 10 kDa phosphoprotein PsbH"/>
    <property type="match status" value="1"/>
</dbReference>
<proteinExistence type="inferred from homology"/>
<geneLocation type="chloroplast"/>
<name>PSBH_TRICV</name>
<gene>
    <name evidence="1" type="primary">psbH</name>
</gene>
<feature type="chain" id="PRO_0000070520" description="Photosystem II reaction center protein H">
    <location>
        <begin position="1"/>
        <end position="67"/>
    </location>
</feature>
<feature type="transmembrane region" description="Helical" evidence="1">
    <location>
        <begin position="29"/>
        <end position="49"/>
    </location>
</feature>
<keyword id="KW-0150">Chloroplast</keyword>
<keyword id="KW-0472">Membrane</keyword>
<keyword id="KW-0602">Photosynthesis</keyword>
<keyword id="KW-0604">Photosystem II</keyword>
<keyword id="KW-0934">Plastid</keyword>
<keyword id="KW-0793">Thylakoid</keyword>
<keyword id="KW-0812">Transmembrane</keyword>
<keyword id="KW-1133">Transmembrane helix</keyword>